<feature type="chain" id="PRO_0000231451" description="Putative pterin-4-alpha-carbinolamine dehydratase">
    <location>
        <begin position="1"/>
        <end position="113"/>
    </location>
</feature>
<keyword id="KW-0456">Lyase</keyword>
<protein>
    <recommendedName>
        <fullName evidence="1">Putative pterin-4-alpha-carbinolamine dehydratase</fullName>
        <shortName evidence="1">PHS</shortName>
        <ecNumber evidence="1">4.2.1.96</ecNumber>
    </recommendedName>
    <alternativeName>
        <fullName evidence="1">4-alpha-hydroxy-tetrahydropterin dehydratase</fullName>
    </alternativeName>
    <alternativeName>
        <fullName evidence="1">Pterin carbinolamine dehydratase</fullName>
        <shortName evidence="1">PCD</shortName>
    </alternativeName>
</protein>
<dbReference type="EC" id="4.2.1.96" evidence="1"/>
<dbReference type="EMBL" id="CR628336">
    <property type="protein sequence ID" value="CAH13132.1"/>
    <property type="molecule type" value="Genomic_DNA"/>
</dbReference>
<dbReference type="RefSeq" id="WP_010947715.1">
    <property type="nucleotide sequence ID" value="NC_006368.1"/>
</dbReference>
<dbReference type="SMR" id="Q5X3Q4"/>
<dbReference type="KEGG" id="lpp:lpp1980"/>
<dbReference type="LegioList" id="lpp1980"/>
<dbReference type="HOGENOM" id="CLU_081974_2_1_6"/>
<dbReference type="GO" id="GO:0008124">
    <property type="term" value="F:4-alpha-hydroxytetrahydrobiopterin dehydratase activity"/>
    <property type="evidence" value="ECO:0007669"/>
    <property type="project" value="UniProtKB-UniRule"/>
</dbReference>
<dbReference type="GO" id="GO:0006729">
    <property type="term" value="P:tetrahydrobiopterin biosynthetic process"/>
    <property type="evidence" value="ECO:0007669"/>
    <property type="project" value="InterPro"/>
</dbReference>
<dbReference type="CDD" id="cd00913">
    <property type="entry name" value="PCD_DCoH_subfamily_a"/>
    <property type="match status" value="1"/>
</dbReference>
<dbReference type="Gene3D" id="3.30.1360.20">
    <property type="entry name" value="Transcriptional coactivator/pterin dehydratase"/>
    <property type="match status" value="1"/>
</dbReference>
<dbReference type="HAMAP" id="MF_00434">
    <property type="entry name" value="Pterin_4_alpha"/>
    <property type="match status" value="1"/>
</dbReference>
<dbReference type="InterPro" id="IPR036428">
    <property type="entry name" value="PCD_sf"/>
</dbReference>
<dbReference type="InterPro" id="IPR001533">
    <property type="entry name" value="Pterin_deHydtase"/>
</dbReference>
<dbReference type="NCBIfam" id="NF002019">
    <property type="entry name" value="PRK00823.1-4"/>
    <property type="match status" value="1"/>
</dbReference>
<dbReference type="PANTHER" id="PTHR12599">
    <property type="entry name" value="PTERIN-4-ALPHA-CARBINOLAMINE DEHYDRATASE"/>
    <property type="match status" value="1"/>
</dbReference>
<dbReference type="PANTHER" id="PTHR12599:SF0">
    <property type="entry name" value="PTERIN-4-ALPHA-CARBINOLAMINE DEHYDRATASE"/>
    <property type="match status" value="1"/>
</dbReference>
<dbReference type="Pfam" id="PF01329">
    <property type="entry name" value="Pterin_4a"/>
    <property type="match status" value="1"/>
</dbReference>
<dbReference type="SUPFAM" id="SSF55248">
    <property type="entry name" value="PCD-like"/>
    <property type="match status" value="1"/>
</dbReference>
<organism>
    <name type="scientific">Legionella pneumophila (strain Paris)</name>
    <dbReference type="NCBI Taxonomy" id="297246"/>
    <lineage>
        <taxon>Bacteria</taxon>
        <taxon>Pseudomonadati</taxon>
        <taxon>Pseudomonadota</taxon>
        <taxon>Gammaproteobacteria</taxon>
        <taxon>Legionellales</taxon>
        <taxon>Legionellaceae</taxon>
        <taxon>Legionella</taxon>
    </lineage>
</organism>
<sequence length="113" mass="12901">MTSDLSSKHCESCEGIGAALNSEQIKNLLPQLNTKWEVTEDNRIIKRAFSFKNFYETMAFVNAIAWIANIENHHPDLEVGYNYCRVHFMTHALNGLTHNDFICAAKIDKLLVD</sequence>
<gene>
    <name type="ordered locus">lpp1980</name>
</gene>
<comment type="catalytic activity">
    <reaction evidence="1">
        <text>(4aS,6R)-4a-hydroxy-L-erythro-5,6,7,8-tetrahydrobiopterin = (6R)-L-erythro-6,7-dihydrobiopterin + H2O</text>
        <dbReference type="Rhea" id="RHEA:11920"/>
        <dbReference type="ChEBI" id="CHEBI:15377"/>
        <dbReference type="ChEBI" id="CHEBI:15642"/>
        <dbReference type="ChEBI" id="CHEBI:43120"/>
        <dbReference type="EC" id="4.2.1.96"/>
    </reaction>
</comment>
<comment type="similarity">
    <text evidence="1">Belongs to the pterin-4-alpha-carbinolamine dehydratase family.</text>
</comment>
<proteinExistence type="inferred from homology"/>
<evidence type="ECO:0000255" key="1">
    <source>
        <dbReference type="HAMAP-Rule" id="MF_00434"/>
    </source>
</evidence>
<reference key="1">
    <citation type="journal article" date="2004" name="Nat. Genet.">
        <title>Evidence in the Legionella pneumophila genome for exploitation of host cell functions and high genome plasticity.</title>
        <authorList>
            <person name="Cazalet C."/>
            <person name="Rusniok C."/>
            <person name="Brueggemann H."/>
            <person name="Zidane N."/>
            <person name="Magnier A."/>
            <person name="Ma L."/>
            <person name="Tichit M."/>
            <person name="Jarraud S."/>
            <person name="Bouchier C."/>
            <person name="Vandenesch F."/>
            <person name="Kunst F."/>
            <person name="Etienne J."/>
            <person name="Glaser P."/>
            <person name="Buchrieser C."/>
        </authorList>
    </citation>
    <scope>NUCLEOTIDE SEQUENCE [LARGE SCALE GENOMIC DNA]</scope>
    <source>
        <strain>Paris</strain>
    </source>
</reference>
<name>PHS_LEGPA</name>
<accession>Q5X3Q4</accession>